<accession>B2J3G8</accession>
<organism>
    <name type="scientific">Nostoc punctiforme (strain ATCC 29133 / PCC 73102)</name>
    <dbReference type="NCBI Taxonomy" id="63737"/>
    <lineage>
        <taxon>Bacteria</taxon>
        <taxon>Bacillati</taxon>
        <taxon>Cyanobacteriota</taxon>
        <taxon>Cyanophyceae</taxon>
        <taxon>Nostocales</taxon>
        <taxon>Nostocaceae</taxon>
        <taxon>Nostoc</taxon>
    </lineage>
</organism>
<sequence>MTIQPSDKPLLEWAGDSLAIGLFEDAVELTGELATLDQKFSGVLKELIAEEEFKGKANSTIFTRVNPGRPVRKLILVGLGKPDALKLDTLRRAAAAVARVAKKQKSKILGFSFPLWNNDPAASAQAIAEGVELALYQDIRFKSEPEDKGSQIETVDLLGFSGQEAAITLANQIVSGVNLARELVAAPANAVTPITLAETAQAIAKDYGLQVEILEKEDCEKLGMGAFLGVAQASELPPKFIHLTYKPEGTPKKKLAIIGKGVTFDSGGLNIKGAGSGIETMKMDMGGAAATLGAAKAIAQIKPDVEVHFISAVAENMISGRAMHPGDILTASNGKTIEVNNTDAEGRLTLADALVYAEKLGLDAIVDLATLTGANVIALGDDIAGLYTPDDDVASQIEKAAQTSGEKIWRMPMEEKYFEGLKSGIADMKNTGPRPGGAITAALFLKQFVKETPWAHLDIAGPVWTDKENGYNGAGATGYGVRLLVNWVLGIGE</sequence>
<name>AMPA_NOSP7</name>
<reference key="1">
    <citation type="journal article" date="2013" name="Plant Physiol.">
        <title>A Nostoc punctiforme Sugar Transporter Necessary to Establish a Cyanobacterium-Plant Symbiosis.</title>
        <authorList>
            <person name="Ekman M."/>
            <person name="Picossi S."/>
            <person name="Campbell E.L."/>
            <person name="Meeks J.C."/>
            <person name="Flores E."/>
        </authorList>
    </citation>
    <scope>NUCLEOTIDE SEQUENCE [LARGE SCALE GENOMIC DNA]</scope>
    <source>
        <strain>ATCC 29133 / PCC 73102</strain>
    </source>
</reference>
<proteinExistence type="inferred from homology"/>
<comment type="function">
    <text evidence="1">Presumably involved in the processing and regular turnover of intracellular proteins. Catalyzes the removal of unsubstituted N-terminal amino acids from various peptides.</text>
</comment>
<comment type="catalytic activity">
    <reaction evidence="1">
        <text>Release of an N-terminal amino acid, Xaa-|-Yaa-, in which Xaa is preferably Leu, but may be other amino acids including Pro although not Arg or Lys, and Yaa may be Pro. Amino acid amides and methyl esters are also readily hydrolyzed, but rates on arylamides are exceedingly low.</text>
        <dbReference type="EC" id="3.4.11.1"/>
    </reaction>
</comment>
<comment type="catalytic activity">
    <reaction evidence="1">
        <text>Release of an N-terminal amino acid, preferentially leucine, but not glutamic or aspartic acids.</text>
        <dbReference type="EC" id="3.4.11.10"/>
    </reaction>
</comment>
<comment type="cofactor">
    <cofactor evidence="1">
        <name>Mn(2+)</name>
        <dbReference type="ChEBI" id="CHEBI:29035"/>
    </cofactor>
    <text evidence="1">Binds 2 manganese ions per subunit.</text>
</comment>
<comment type="subcellular location">
    <subcellularLocation>
        <location evidence="1">Cytoplasm</location>
    </subcellularLocation>
</comment>
<comment type="similarity">
    <text evidence="1">Belongs to the peptidase M17 family.</text>
</comment>
<dbReference type="EC" id="3.4.11.1" evidence="1"/>
<dbReference type="EC" id="3.4.11.10" evidence="1"/>
<dbReference type="EMBL" id="CP001037">
    <property type="protein sequence ID" value="ACC78898.1"/>
    <property type="molecule type" value="Genomic_DNA"/>
</dbReference>
<dbReference type="RefSeq" id="WP_012406927.1">
    <property type="nucleotide sequence ID" value="NC_010628.1"/>
</dbReference>
<dbReference type="SMR" id="B2J3G8"/>
<dbReference type="STRING" id="63737.Npun_F0097"/>
<dbReference type="MEROPS" id="M17.A03"/>
<dbReference type="EnsemblBacteria" id="ACC78898">
    <property type="protein sequence ID" value="ACC78898"/>
    <property type="gene ID" value="Npun_F0097"/>
</dbReference>
<dbReference type="KEGG" id="npu:Npun_F0097"/>
<dbReference type="eggNOG" id="COG0260">
    <property type="taxonomic scope" value="Bacteria"/>
</dbReference>
<dbReference type="HOGENOM" id="CLU_013734_5_1_3"/>
<dbReference type="OrthoDB" id="9809354at2"/>
<dbReference type="PhylomeDB" id="B2J3G8"/>
<dbReference type="Proteomes" id="UP000001191">
    <property type="component" value="Chromosome"/>
</dbReference>
<dbReference type="GO" id="GO:0005737">
    <property type="term" value="C:cytoplasm"/>
    <property type="evidence" value="ECO:0007669"/>
    <property type="project" value="UniProtKB-SubCell"/>
</dbReference>
<dbReference type="GO" id="GO:0030145">
    <property type="term" value="F:manganese ion binding"/>
    <property type="evidence" value="ECO:0007669"/>
    <property type="project" value="UniProtKB-UniRule"/>
</dbReference>
<dbReference type="GO" id="GO:0070006">
    <property type="term" value="F:metalloaminopeptidase activity"/>
    <property type="evidence" value="ECO:0007669"/>
    <property type="project" value="InterPro"/>
</dbReference>
<dbReference type="GO" id="GO:0006508">
    <property type="term" value="P:proteolysis"/>
    <property type="evidence" value="ECO:0007669"/>
    <property type="project" value="UniProtKB-KW"/>
</dbReference>
<dbReference type="CDD" id="cd00433">
    <property type="entry name" value="Peptidase_M17"/>
    <property type="match status" value="1"/>
</dbReference>
<dbReference type="Gene3D" id="3.40.220.10">
    <property type="entry name" value="Leucine Aminopeptidase, subunit E, domain 1"/>
    <property type="match status" value="1"/>
</dbReference>
<dbReference type="Gene3D" id="3.40.630.10">
    <property type="entry name" value="Zn peptidases"/>
    <property type="match status" value="1"/>
</dbReference>
<dbReference type="HAMAP" id="MF_00181">
    <property type="entry name" value="Cytosol_peptidase_M17"/>
    <property type="match status" value="1"/>
</dbReference>
<dbReference type="InterPro" id="IPR011356">
    <property type="entry name" value="Leucine_aapep/pepB"/>
</dbReference>
<dbReference type="InterPro" id="IPR043472">
    <property type="entry name" value="Macro_dom-like"/>
</dbReference>
<dbReference type="InterPro" id="IPR000819">
    <property type="entry name" value="Peptidase_M17_C"/>
</dbReference>
<dbReference type="InterPro" id="IPR023042">
    <property type="entry name" value="Peptidase_M17_leu_NH2_pept"/>
</dbReference>
<dbReference type="InterPro" id="IPR008283">
    <property type="entry name" value="Peptidase_M17_N"/>
</dbReference>
<dbReference type="NCBIfam" id="NF002073">
    <property type="entry name" value="PRK00913.1-2"/>
    <property type="match status" value="1"/>
</dbReference>
<dbReference type="NCBIfam" id="NF002074">
    <property type="entry name" value="PRK00913.1-4"/>
    <property type="match status" value="1"/>
</dbReference>
<dbReference type="NCBIfam" id="NF002076">
    <property type="entry name" value="PRK00913.2-3"/>
    <property type="match status" value="1"/>
</dbReference>
<dbReference type="NCBIfam" id="NF002083">
    <property type="entry name" value="PRK00913.3-5"/>
    <property type="match status" value="1"/>
</dbReference>
<dbReference type="PANTHER" id="PTHR11963:SF23">
    <property type="entry name" value="CYTOSOL AMINOPEPTIDASE"/>
    <property type="match status" value="1"/>
</dbReference>
<dbReference type="PANTHER" id="PTHR11963">
    <property type="entry name" value="LEUCINE AMINOPEPTIDASE-RELATED"/>
    <property type="match status" value="1"/>
</dbReference>
<dbReference type="Pfam" id="PF00883">
    <property type="entry name" value="Peptidase_M17"/>
    <property type="match status" value="1"/>
</dbReference>
<dbReference type="Pfam" id="PF02789">
    <property type="entry name" value="Peptidase_M17_N"/>
    <property type="match status" value="1"/>
</dbReference>
<dbReference type="PRINTS" id="PR00481">
    <property type="entry name" value="LAMNOPPTDASE"/>
</dbReference>
<dbReference type="SUPFAM" id="SSF52949">
    <property type="entry name" value="Macro domain-like"/>
    <property type="match status" value="1"/>
</dbReference>
<dbReference type="SUPFAM" id="SSF53187">
    <property type="entry name" value="Zn-dependent exopeptidases"/>
    <property type="match status" value="1"/>
</dbReference>
<dbReference type="PROSITE" id="PS00631">
    <property type="entry name" value="CYTOSOL_AP"/>
    <property type="match status" value="1"/>
</dbReference>
<protein>
    <recommendedName>
        <fullName evidence="1">Probable cytosol aminopeptidase</fullName>
        <ecNumber evidence="1">3.4.11.1</ecNumber>
    </recommendedName>
    <alternativeName>
        <fullName evidence="1">Leucine aminopeptidase</fullName>
        <shortName evidence="1">LAP</shortName>
        <ecNumber evidence="1">3.4.11.10</ecNumber>
    </alternativeName>
    <alternativeName>
        <fullName evidence="1">Leucyl aminopeptidase</fullName>
    </alternativeName>
</protein>
<feature type="chain" id="PRO_1000098333" description="Probable cytosol aminopeptidase">
    <location>
        <begin position="1"/>
        <end position="493"/>
    </location>
</feature>
<feature type="active site" evidence="1">
    <location>
        <position position="272"/>
    </location>
</feature>
<feature type="active site" evidence="1">
    <location>
        <position position="347"/>
    </location>
</feature>
<feature type="binding site" evidence="1">
    <location>
        <position position="260"/>
    </location>
    <ligand>
        <name>Mn(2+)</name>
        <dbReference type="ChEBI" id="CHEBI:29035"/>
        <label>2</label>
    </ligand>
</feature>
<feature type="binding site" evidence="1">
    <location>
        <position position="265"/>
    </location>
    <ligand>
        <name>Mn(2+)</name>
        <dbReference type="ChEBI" id="CHEBI:29035"/>
        <label>1</label>
    </ligand>
</feature>
<feature type="binding site" evidence="1">
    <location>
        <position position="265"/>
    </location>
    <ligand>
        <name>Mn(2+)</name>
        <dbReference type="ChEBI" id="CHEBI:29035"/>
        <label>2</label>
    </ligand>
</feature>
<feature type="binding site" evidence="1">
    <location>
        <position position="284"/>
    </location>
    <ligand>
        <name>Mn(2+)</name>
        <dbReference type="ChEBI" id="CHEBI:29035"/>
        <label>2</label>
    </ligand>
</feature>
<feature type="binding site" evidence="1">
    <location>
        <position position="343"/>
    </location>
    <ligand>
        <name>Mn(2+)</name>
        <dbReference type="ChEBI" id="CHEBI:29035"/>
        <label>1</label>
    </ligand>
</feature>
<feature type="binding site" evidence="1">
    <location>
        <position position="345"/>
    </location>
    <ligand>
        <name>Mn(2+)</name>
        <dbReference type="ChEBI" id="CHEBI:29035"/>
        <label>1</label>
    </ligand>
</feature>
<feature type="binding site" evidence="1">
    <location>
        <position position="345"/>
    </location>
    <ligand>
        <name>Mn(2+)</name>
        <dbReference type="ChEBI" id="CHEBI:29035"/>
        <label>2</label>
    </ligand>
</feature>
<keyword id="KW-0031">Aminopeptidase</keyword>
<keyword id="KW-0963">Cytoplasm</keyword>
<keyword id="KW-0378">Hydrolase</keyword>
<keyword id="KW-0464">Manganese</keyword>
<keyword id="KW-0479">Metal-binding</keyword>
<keyword id="KW-0645">Protease</keyword>
<keyword id="KW-1185">Reference proteome</keyword>
<gene>
    <name evidence="1" type="primary">pepA</name>
    <name type="ordered locus">Npun_F0097</name>
</gene>
<evidence type="ECO:0000255" key="1">
    <source>
        <dbReference type="HAMAP-Rule" id="MF_00181"/>
    </source>
</evidence>